<name>METK2_RHOPB</name>
<accession>Q20YV7</accession>
<keyword id="KW-0067">ATP-binding</keyword>
<keyword id="KW-0963">Cytoplasm</keyword>
<keyword id="KW-0460">Magnesium</keyword>
<keyword id="KW-0479">Metal-binding</keyword>
<keyword id="KW-0547">Nucleotide-binding</keyword>
<keyword id="KW-0554">One-carbon metabolism</keyword>
<keyword id="KW-0630">Potassium</keyword>
<keyword id="KW-0808">Transferase</keyword>
<organism>
    <name type="scientific">Rhodopseudomonas palustris (strain BisB18)</name>
    <dbReference type="NCBI Taxonomy" id="316056"/>
    <lineage>
        <taxon>Bacteria</taxon>
        <taxon>Pseudomonadati</taxon>
        <taxon>Pseudomonadota</taxon>
        <taxon>Alphaproteobacteria</taxon>
        <taxon>Hyphomicrobiales</taxon>
        <taxon>Nitrobacteraceae</taxon>
        <taxon>Rhodopseudomonas</taxon>
    </lineage>
</organism>
<reference key="1">
    <citation type="submission" date="2006-03" db="EMBL/GenBank/DDBJ databases">
        <title>Complete sequence of Rhodopseudomonas palustris BisB18.</title>
        <authorList>
            <consortium name="US DOE Joint Genome Institute"/>
            <person name="Copeland A."/>
            <person name="Lucas S."/>
            <person name="Lapidus A."/>
            <person name="Barry K."/>
            <person name="Detter J.C."/>
            <person name="Glavina del Rio T."/>
            <person name="Hammon N."/>
            <person name="Israni S."/>
            <person name="Dalin E."/>
            <person name="Tice H."/>
            <person name="Pitluck S."/>
            <person name="Chain P."/>
            <person name="Malfatti S."/>
            <person name="Shin M."/>
            <person name="Vergez L."/>
            <person name="Schmutz J."/>
            <person name="Larimer F."/>
            <person name="Land M."/>
            <person name="Hauser L."/>
            <person name="Pelletier D.A."/>
            <person name="Kyrpides N."/>
            <person name="Anderson I."/>
            <person name="Oda Y."/>
            <person name="Harwood C.S."/>
            <person name="Richardson P."/>
        </authorList>
    </citation>
    <scope>NUCLEOTIDE SEQUENCE [LARGE SCALE GENOMIC DNA]</scope>
    <source>
        <strain>BisB18</strain>
    </source>
</reference>
<proteinExistence type="inferred from homology"/>
<comment type="function">
    <text evidence="1">Catalyzes the formation of S-adenosylmethionine (AdoMet) from methionine and ATP. The overall synthetic reaction is composed of two sequential steps, AdoMet formation and the subsequent tripolyphosphate hydrolysis which occurs prior to release of AdoMet from the enzyme.</text>
</comment>
<comment type="catalytic activity">
    <reaction evidence="1">
        <text>L-methionine + ATP + H2O = S-adenosyl-L-methionine + phosphate + diphosphate</text>
        <dbReference type="Rhea" id="RHEA:21080"/>
        <dbReference type="ChEBI" id="CHEBI:15377"/>
        <dbReference type="ChEBI" id="CHEBI:30616"/>
        <dbReference type="ChEBI" id="CHEBI:33019"/>
        <dbReference type="ChEBI" id="CHEBI:43474"/>
        <dbReference type="ChEBI" id="CHEBI:57844"/>
        <dbReference type="ChEBI" id="CHEBI:59789"/>
        <dbReference type="EC" id="2.5.1.6"/>
    </reaction>
</comment>
<comment type="cofactor">
    <cofactor evidence="1">
        <name>Mg(2+)</name>
        <dbReference type="ChEBI" id="CHEBI:18420"/>
    </cofactor>
    <text evidence="1">Binds 2 divalent ions per subunit.</text>
</comment>
<comment type="cofactor">
    <cofactor evidence="1">
        <name>K(+)</name>
        <dbReference type="ChEBI" id="CHEBI:29103"/>
    </cofactor>
    <text evidence="1">Binds 1 potassium ion per subunit.</text>
</comment>
<comment type="pathway">
    <text evidence="1">Amino-acid biosynthesis; S-adenosyl-L-methionine biosynthesis; S-adenosyl-L-methionine from L-methionine: step 1/1.</text>
</comment>
<comment type="subunit">
    <text evidence="1">Homotetramer; dimer of dimers.</text>
</comment>
<comment type="subcellular location">
    <subcellularLocation>
        <location evidence="1">Cytoplasm</location>
    </subcellularLocation>
</comment>
<comment type="similarity">
    <text evidence="1">Belongs to the AdoMet synthase family.</text>
</comment>
<evidence type="ECO:0000255" key="1">
    <source>
        <dbReference type="HAMAP-Rule" id="MF_00086"/>
    </source>
</evidence>
<gene>
    <name evidence="1" type="primary">metK2</name>
    <name type="ordered locus">RPC_4154</name>
</gene>
<feature type="chain" id="PRO_0000241028" description="S-adenosylmethionine synthase 2">
    <location>
        <begin position="1"/>
        <end position="398"/>
    </location>
</feature>
<feature type="region of interest" description="Flexible loop" evidence="1">
    <location>
        <begin position="108"/>
        <end position="118"/>
    </location>
</feature>
<feature type="binding site" description="in other chain" evidence="1">
    <location>
        <position position="16"/>
    </location>
    <ligand>
        <name>ATP</name>
        <dbReference type="ChEBI" id="CHEBI:30616"/>
        <note>ligand shared between two neighboring subunits</note>
    </ligand>
</feature>
<feature type="binding site" evidence="1">
    <location>
        <position position="18"/>
    </location>
    <ligand>
        <name>Mg(2+)</name>
        <dbReference type="ChEBI" id="CHEBI:18420"/>
    </ligand>
</feature>
<feature type="binding site" evidence="1">
    <location>
        <position position="51"/>
    </location>
    <ligand>
        <name>K(+)</name>
        <dbReference type="ChEBI" id="CHEBI:29103"/>
    </ligand>
</feature>
<feature type="binding site" description="in other chain" evidence="1">
    <location>
        <position position="64"/>
    </location>
    <ligand>
        <name>L-methionine</name>
        <dbReference type="ChEBI" id="CHEBI:57844"/>
        <note>ligand shared between two neighboring subunits</note>
    </ligand>
</feature>
<feature type="binding site" description="in other chain" evidence="1">
    <location>
        <position position="108"/>
    </location>
    <ligand>
        <name>L-methionine</name>
        <dbReference type="ChEBI" id="CHEBI:57844"/>
        <note>ligand shared between two neighboring subunits</note>
    </ligand>
</feature>
<feature type="binding site" description="in other chain" evidence="1">
    <location>
        <begin position="176"/>
        <end position="178"/>
    </location>
    <ligand>
        <name>ATP</name>
        <dbReference type="ChEBI" id="CHEBI:30616"/>
        <note>ligand shared between two neighboring subunits</note>
    </ligand>
</feature>
<feature type="binding site" description="in other chain" evidence="1">
    <location>
        <begin position="242"/>
        <end position="243"/>
    </location>
    <ligand>
        <name>ATP</name>
        <dbReference type="ChEBI" id="CHEBI:30616"/>
        <note>ligand shared between two neighboring subunits</note>
    </ligand>
</feature>
<feature type="binding site" evidence="1">
    <location>
        <position position="251"/>
    </location>
    <ligand>
        <name>ATP</name>
        <dbReference type="ChEBI" id="CHEBI:30616"/>
        <note>ligand shared between two neighboring subunits</note>
    </ligand>
</feature>
<feature type="binding site" evidence="1">
    <location>
        <position position="251"/>
    </location>
    <ligand>
        <name>L-methionine</name>
        <dbReference type="ChEBI" id="CHEBI:57844"/>
        <note>ligand shared between two neighboring subunits</note>
    </ligand>
</feature>
<feature type="binding site" description="in other chain" evidence="1">
    <location>
        <begin position="257"/>
        <end position="258"/>
    </location>
    <ligand>
        <name>ATP</name>
        <dbReference type="ChEBI" id="CHEBI:30616"/>
        <note>ligand shared between two neighboring subunits</note>
    </ligand>
</feature>
<feature type="binding site" evidence="1">
    <location>
        <position position="274"/>
    </location>
    <ligand>
        <name>ATP</name>
        <dbReference type="ChEBI" id="CHEBI:30616"/>
        <note>ligand shared between two neighboring subunits</note>
    </ligand>
</feature>
<feature type="binding site" evidence="1">
    <location>
        <position position="278"/>
    </location>
    <ligand>
        <name>ATP</name>
        <dbReference type="ChEBI" id="CHEBI:30616"/>
        <note>ligand shared between two neighboring subunits</note>
    </ligand>
</feature>
<feature type="binding site" description="in other chain" evidence="1">
    <location>
        <position position="282"/>
    </location>
    <ligand>
        <name>L-methionine</name>
        <dbReference type="ChEBI" id="CHEBI:57844"/>
        <note>ligand shared between two neighboring subunits</note>
    </ligand>
</feature>
<protein>
    <recommendedName>
        <fullName evidence="1">S-adenosylmethionine synthase 2</fullName>
        <shortName evidence="1">AdoMet synthase 2</shortName>
        <ecNumber evidence="1">2.5.1.6</ecNumber>
    </recommendedName>
    <alternativeName>
        <fullName evidence="1">MAT 2</fullName>
    </alternativeName>
    <alternativeName>
        <fullName evidence="1">Methionine adenosyltransferase 2</fullName>
    </alternativeName>
</protein>
<dbReference type="EC" id="2.5.1.6" evidence="1"/>
<dbReference type="EMBL" id="CP000301">
    <property type="protein sequence ID" value="ABD89679.1"/>
    <property type="molecule type" value="Genomic_DNA"/>
</dbReference>
<dbReference type="SMR" id="Q20YV7"/>
<dbReference type="STRING" id="316056.RPC_4154"/>
<dbReference type="KEGG" id="rpc:RPC_4154"/>
<dbReference type="eggNOG" id="COG0192">
    <property type="taxonomic scope" value="Bacteria"/>
</dbReference>
<dbReference type="HOGENOM" id="CLU_041802_1_1_5"/>
<dbReference type="OrthoDB" id="9801686at2"/>
<dbReference type="UniPathway" id="UPA00315">
    <property type="reaction ID" value="UER00080"/>
</dbReference>
<dbReference type="GO" id="GO:0005737">
    <property type="term" value="C:cytoplasm"/>
    <property type="evidence" value="ECO:0007669"/>
    <property type="project" value="UniProtKB-SubCell"/>
</dbReference>
<dbReference type="GO" id="GO:0005524">
    <property type="term" value="F:ATP binding"/>
    <property type="evidence" value="ECO:0007669"/>
    <property type="project" value="UniProtKB-UniRule"/>
</dbReference>
<dbReference type="GO" id="GO:0000287">
    <property type="term" value="F:magnesium ion binding"/>
    <property type="evidence" value="ECO:0007669"/>
    <property type="project" value="UniProtKB-UniRule"/>
</dbReference>
<dbReference type="GO" id="GO:0004478">
    <property type="term" value="F:methionine adenosyltransferase activity"/>
    <property type="evidence" value="ECO:0007669"/>
    <property type="project" value="UniProtKB-UniRule"/>
</dbReference>
<dbReference type="GO" id="GO:0006730">
    <property type="term" value="P:one-carbon metabolic process"/>
    <property type="evidence" value="ECO:0007669"/>
    <property type="project" value="UniProtKB-KW"/>
</dbReference>
<dbReference type="GO" id="GO:0006556">
    <property type="term" value="P:S-adenosylmethionine biosynthetic process"/>
    <property type="evidence" value="ECO:0007669"/>
    <property type="project" value="UniProtKB-UniRule"/>
</dbReference>
<dbReference type="CDD" id="cd18079">
    <property type="entry name" value="S-AdoMet_synt"/>
    <property type="match status" value="1"/>
</dbReference>
<dbReference type="FunFam" id="3.30.300.10:FF:000003">
    <property type="entry name" value="S-adenosylmethionine synthase"/>
    <property type="match status" value="1"/>
</dbReference>
<dbReference type="Gene3D" id="3.30.300.10">
    <property type="match status" value="3"/>
</dbReference>
<dbReference type="HAMAP" id="MF_00086">
    <property type="entry name" value="S_AdoMet_synth1"/>
    <property type="match status" value="1"/>
</dbReference>
<dbReference type="InterPro" id="IPR022631">
    <property type="entry name" value="ADOMET_SYNTHASE_CS"/>
</dbReference>
<dbReference type="InterPro" id="IPR022630">
    <property type="entry name" value="S-AdoMet_synt_C"/>
</dbReference>
<dbReference type="InterPro" id="IPR022629">
    <property type="entry name" value="S-AdoMet_synt_central"/>
</dbReference>
<dbReference type="InterPro" id="IPR022628">
    <property type="entry name" value="S-AdoMet_synt_N"/>
</dbReference>
<dbReference type="InterPro" id="IPR002133">
    <property type="entry name" value="S-AdoMet_synthetase"/>
</dbReference>
<dbReference type="InterPro" id="IPR022636">
    <property type="entry name" value="S-AdoMet_synthetase_sfam"/>
</dbReference>
<dbReference type="NCBIfam" id="TIGR01034">
    <property type="entry name" value="metK"/>
    <property type="match status" value="1"/>
</dbReference>
<dbReference type="PANTHER" id="PTHR11964">
    <property type="entry name" value="S-ADENOSYLMETHIONINE SYNTHETASE"/>
    <property type="match status" value="1"/>
</dbReference>
<dbReference type="Pfam" id="PF02773">
    <property type="entry name" value="S-AdoMet_synt_C"/>
    <property type="match status" value="1"/>
</dbReference>
<dbReference type="Pfam" id="PF02772">
    <property type="entry name" value="S-AdoMet_synt_M"/>
    <property type="match status" value="1"/>
</dbReference>
<dbReference type="Pfam" id="PF00438">
    <property type="entry name" value="S-AdoMet_synt_N"/>
    <property type="match status" value="1"/>
</dbReference>
<dbReference type="PIRSF" id="PIRSF000497">
    <property type="entry name" value="MAT"/>
    <property type="match status" value="1"/>
</dbReference>
<dbReference type="SUPFAM" id="SSF55973">
    <property type="entry name" value="S-adenosylmethionine synthetase"/>
    <property type="match status" value="3"/>
</dbReference>
<dbReference type="PROSITE" id="PS00376">
    <property type="entry name" value="ADOMET_SYNTHASE_1"/>
    <property type="match status" value="1"/>
</dbReference>
<dbReference type="PROSITE" id="PS00377">
    <property type="entry name" value="ADOMET_SYNTHASE_2"/>
    <property type="match status" value="1"/>
</dbReference>
<sequence>MRASYLFTSESVSEGHPDKVCDRISDEIVDLFFREGPKAGIDPWAIRAACETLATTNKVVIAGETRGPASVTNEHIEHVVREAIKDIGYEQDGFHWKTADIEILLHPQSADIAQGVDALQPGTNQEEGAGDQGIMFGYATNETPDLMPAPIFYAHKILRLISEARHSGKEKVLGPDSKSQVTIQYENGKPVGVREIVVSHQHLVEDMTSNQVRERVEPYVREALPEGWITDKTIWHINPTGKFFIGGPDGDTGLTGRKIIVDTYGGAAPHGGGAFSGKDPTKVDRSAAYASRYLAKNIVAAGLADRCTLQLAYAIGVARPLSIYIDTHGTGKVTEDKLEKAVAEAMDLTPRGIRKHLDLNKPIYARTSSYGHFGRTPDAEGGFSWEKTDLAEALKRAI</sequence>